<organism>
    <name type="scientific">Hantaan virus (strain 76-118)</name>
    <name type="common">Korean hemorrhagic fever virus</name>
    <dbReference type="NCBI Taxonomy" id="11602"/>
    <lineage>
        <taxon>Viruses</taxon>
        <taxon>Riboviria</taxon>
        <taxon>Orthornavirae</taxon>
        <taxon>Negarnaviricota</taxon>
        <taxon>Polyploviricotina</taxon>
        <taxon>Ellioviricetes</taxon>
        <taxon>Bunyavirales</taxon>
        <taxon>Hantaviridae</taxon>
        <taxon>Mammantavirinae</taxon>
        <taxon>Orthohantavirus</taxon>
        <taxon>Orthohantavirus hantanense</taxon>
    </lineage>
</organism>
<name>NCAP_HANTV</name>
<comment type="function">
    <text evidence="1 4 11 13 14 15 16">Encapsidates the genome protecting it from nucleases (PubMed:26923588). The encapsidated genomic RNA is termed the nucleocapsid (NC) and serves as template for transcription and replication (Probable). The nucleocapsid has a left-handed helical structure (PubMed:30638449). As a trimer, specifically binds and acts as a chaperone to unwind the panhandle structure formed by the viral RNA (vRNA) termini (By similarity). Involved in the transcription and replication initiation of vRNA by mediating primer annealing (By similarity). Plays a role in cap snatching by sequestering capped RNAs in P bodies for use by the viral RdRp during transcription initiation (By similarity). Substitutes for the cellular cap-binding complex (eIF4F) to preferentially facilitate the translation of capped mRNAs (By similarity). Initiates the translation by specifically binding to the cap and 40S ribosomal subunit (By similarity). Prevents the viral glycoprotein N (Gn) from autophagy-dependent breakdown maybe by blocking autophagosome formation (PubMed:31091447). Inhibits host EIF2AK2/PKR dimerization to prevent PKR-induced translational shutdown in cells and thus the activation of the antiviral state (By similarity). Also displays sequence-unspecific DNA endonuclease activity (By similarity). Suppresses apoptosis probably through the inhibition of nuclear import of NF-kappa-B (PubMed:20227103).</text>
</comment>
<comment type="subunit">
    <text evidence="2 4 7 8 9 11 13 14 15">Homotrimer (By similarity). Homomultimer (PubMed:12502810, PubMed:26923588, PubMed:30638449). Homomultimerizes and binds to viral genomic RNA to form the nucleocapsid (PubMed:26923588). Interacts with host MAP1LC3B; this interaction participates to the protection of Gn from virus-triggered autophagy (PubMed:31091447). Interacts with host SNAP29; this interaction participates to the protection of glycoprotein N from virus-triggered autophagy (PubMed:31091447). Interacts (via N-terminus) with host RPS19; this interaction probably mediates the loading of the 40S ribosomal subunit on viral capped mRNA during N-mediated translation initiation (By similarity). Interacts with the viral RdRp (By similarity). Interacts with host SUMO1 (PubMed:12573574). Interacts with host DAXX (By similarity). Interacts with the viral glycoprotein N (via C-terminus) (By similarity). Interacts with the viral glycoprotein C (via C-terminus) (By similarity). Interacts with host SUMO1-interacting proteins HIPK2, CHD3, and TDP2/TTRAP (PubMed:14609633). Interacts with host UBE2I/UBC9 (PubMed:12573574). Interacts weakly with host NF-kappa-B (PubMed:20227103).</text>
</comment>
<comment type="subcellular location">
    <subcellularLocation>
        <location evidence="16">Virion</location>
    </subcellularLocation>
    <subcellularLocation>
        <location evidence="8">Host cytoplasm</location>
        <location evidence="8">Host perinuclear region</location>
    </subcellularLocation>
    <subcellularLocation>
        <location evidence="12">Host Golgi apparatus</location>
        <location evidence="12">Host cis-Golgi network</location>
    </subcellularLocation>
    <text evidence="16">Internal protein of virus particle.</text>
</comment>
<comment type="domain">
    <text evidence="4 6 10 15">The N-terminus is required for chaperone activity and, in trimeric form, this region likely serves in high affinity vRNA panhandle recognition (By similarity). The N-terminus also contains a coiled coil region, which probably participates in but is insufficient to initiate N trimerization (By similarity). The YxxL motif is indispensable for the interaction with host MAP1LC3B (PubMed:31091447). The central region is involved in specific RNA-binding (PubMed:11884555, PubMed:16014963). Has distinct cap- and RNA-binding sites so it can bind simultaneously both the vRNA and mRNA cap (By similarity).</text>
</comment>
<comment type="similarity">
    <text evidence="16">Belongs to the hantavirus nucleocapsid protein family.</text>
</comment>
<feature type="chain" id="PRO_0000222009" description="Nucleoprotein">
    <location>
        <begin position="1"/>
        <end position="429"/>
    </location>
</feature>
<feature type="region of interest" description="Viral panhandle binding" evidence="4">
    <location>
        <begin position="1"/>
        <end position="175"/>
    </location>
</feature>
<feature type="region of interest" description="Chaperone activity" evidence="4">
    <location>
        <begin position="1"/>
        <end position="100"/>
    </location>
</feature>
<feature type="region of interest" description="Homomultimerization" evidence="3">
    <location>
        <begin position="1"/>
        <end position="79"/>
    </location>
</feature>
<feature type="region of interest" description="RdRP binding" evidence="4">
    <location>
        <begin position="1"/>
        <end position="50"/>
    </location>
</feature>
<feature type="region of interest" description="Interaction with glycoprotein N" evidence="3">
    <location>
        <begin position="80"/>
        <end position="248"/>
    </location>
</feature>
<feature type="region of interest" description="Homomultimerization" evidence="7">
    <location>
        <begin position="100"/>
        <end position="125"/>
    </location>
</feature>
<feature type="region of interest" description="Interaction with host RPS19" evidence="4">
    <location>
        <begin position="150"/>
        <end position="175"/>
    </location>
</feature>
<feature type="region of interest" description="Viral RNA-binding" evidence="6 10">
    <location>
        <begin position="175"/>
        <end position="217"/>
    </location>
</feature>
<feature type="region of interest" description="Interaction with host UBE2I/UBC9" evidence="8">
    <location>
        <begin position="188"/>
        <end position="191"/>
    </location>
</feature>
<feature type="region of interest" description="Interaction with host DAXX" evidence="2">
    <location>
        <begin position="373"/>
        <end position="429"/>
    </location>
</feature>
<feature type="region of interest" description="Homomultimerization" evidence="3">
    <location>
        <begin position="373"/>
        <end position="421"/>
    </location>
</feature>
<feature type="coiled-coil region" evidence="5">
    <location>
        <begin position="4"/>
        <end position="31"/>
    </location>
</feature>
<feature type="short sequence motif" description="YxxL" evidence="15">
    <location>
        <begin position="178"/>
        <end position="181"/>
    </location>
</feature>
<feature type="site" description="Important for the endonuclease activity" evidence="4">
    <location>
        <position position="88"/>
    </location>
</feature>
<feature type="site" description="Important for the endonuclease activity" evidence="4">
    <location>
        <position position="103"/>
    </location>
</feature>
<feature type="mutagenesis site" description="No effect on RNA binding." evidence="10">
    <original>Y</original>
    <variation>A</variation>
    <location>
        <position position="178"/>
    </location>
</feature>
<feature type="mutagenesis site" description="Decreased interaction with host UBE2I/UBC9 and SUMO1." evidence="8">
    <original>K</original>
    <variation>A</variation>
    <location>
        <position position="189"/>
    </location>
</feature>
<feature type="mutagenesis site" description="Slightly decreased interaction with host SUMO1 and no effect on interaction with host UBE2I/UBC9." evidence="8">
    <original>K</original>
    <variation>R</variation>
    <location>
        <position position="189"/>
    </location>
</feature>
<feature type="mutagenesis site" description="Slightly decreased interaction with host SUMO1 and no effect on interaction with host UBE2I/UBC9." evidence="8">
    <original>E</original>
    <variation>A</variation>
    <location>
        <position position="191"/>
    </location>
</feature>
<feature type="mutagenesis site" description="No effect on the interaction with host SUMO1 and UBE2I/UBC9." evidence="8">
    <original>E</original>
    <variation>D</variation>
    <location>
        <position position="191"/>
    </location>
</feature>
<feature type="mutagenesis site" description="84% loss of RNA binding." evidence="10">
    <original>E</original>
    <variation>A</variation>
    <location>
        <position position="192"/>
    </location>
</feature>
<feature type="mutagenesis site" description="78% loss of RNA binding." evidence="10">
    <original>Y</original>
    <variation>A</variation>
    <location>
        <position position="206"/>
    </location>
</feature>
<feature type="mutagenesis site" description="84% loss of RNA binding." evidence="10">
    <original>S</original>
    <variation>A</variation>
    <location>
        <position position="217"/>
    </location>
</feature>
<feature type="helix" evidence="19">
    <location>
        <begin position="4"/>
        <end position="34"/>
    </location>
</feature>
<feature type="helix" evidence="19">
    <location>
        <begin position="38"/>
        <end position="70"/>
    </location>
</feature>
<feature type="turn" evidence="21">
    <location>
        <begin position="81"/>
        <end position="83"/>
    </location>
</feature>
<feature type="helix" evidence="20">
    <location>
        <begin position="119"/>
        <end position="128"/>
    </location>
</feature>
<feature type="helix" evidence="20">
    <location>
        <begin position="131"/>
        <end position="141"/>
    </location>
</feature>
<feature type="turn" evidence="20">
    <location>
        <begin position="142"/>
        <end position="144"/>
    </location>
</feature>
<feature type="helix" evidence="21">
    <location>
        <begin position="145"/>
        <end position="151"/>
    </location>
</feature>
<feature type="strand" evidence="20">
    <location>
        <begin position="156"/>
        <end position="159"/>
    </location>
</feature>
<feature type="strand" evidence="20">
    <location>
        <begin position="177"/>
        <end position="180"/>
    </location>
</feature>
<feature type="strand" evidence="20">
    <location>
        <begin position="184"/>
        <end position="186"/>
    </location>
</feature>
<feature type="helix" evidence="20">
    <location>
        <begin position="195"/>
        <end position="205"/>
    </location>
</feature>
<feature type="helix" evidence="20">
    <location>
        <begin position="208"/>
        <end position="213"/>
    </location>
</feature>
<feature type="turn" evidence="20">
    <location>
        <begin position="218"/>
        <end position="220"/>
    </location>
</feature>
<feature type="helix" evidence="20">
    <location>
        <begin position="221"/>
        <end position="223"/>
    </location>
</feature>
<feature type="helix" evidence="20">
    <location>
        <begin position="226"/>
        <end position="230"/>
    </location>
</feature>
<feature type="helix" evidence="20">
    <location>
        <begin position="232"/>
        <end position="241"/>
    </location>
</feature>
<feature type="strand" evidence="20">
    <location>
        <begin position="246"/>
        <end position="248"/>
    </location>
</feature>
<feature type="helix" evidence="20">
    <location>
        <begin position="262"/>
        <end position="276"/>
    </location>
</feature>
<feature type="helix" evidence="20">
    <location>
        <begin position="279"/>
        <end position="290"/>
    </location>
</feature>
<feature type="strand" evidence="20">
    <location>
        <begin position="298"/>
        <end position="301"/>
    </location>
</feature>
<feature type="helix" evidence="21">
    <location>
        <begin position="305"/>
        <end position="308"/>
    </location>
</feature>
<feature type="helix" evidence="20">
    <location>
        <begin position="325"/>
        <end position="346"/>
    </location>
</feature>
<feature type="helix" evidence="21">
    <location>
        <begin position="351"/>
        <end position="357"/>
    </location>
</feature>
<feature type="helix" evidence="20">
    <location>
        <begin position="361"/>
        <end position="370"/>
    </location>
</feature>
<feature type="turn" evidence="21">
    <location>
        <begin position="371"/>
        <end position="373"/>
    </location>
</feature>
<feature type="helix" evidence="20">
    <location>
        <begin position="378"/>
        <end position="394"/>
    </location>
</feature>
<feature type="helix" evidence="20">
    <location>
        <begin position="404"/>
        <end position="420"/>
    </location>
</feature>
<proteinExistence type="evidence at protein level"/>
<keyword id="KW-0002">3D-structure</keyword>
<keyword id="KW-0167">Capsid protein</keyword>
<keyword id="KW-0143">Chaperone</keyword>
<keyword id="KW-0175">Coiled coil</keyword>
<keyword id="KW-0255">Endonuclease</keyword>
<keyword id="KW-1139">Helical capsid protein</keyword>
<keyword id="KW-1035">Host cytoplasm</keyword>
<keyword id="KW-1040">Host Golgi apparatus</keyword>
<keyword id="KW-0945">Host-virus interaction</keyword>
<keyword id="KW-0378">Hydrolase</keyword>
<keyword id="KW-1119">Modulation of host cell apoptosis by virus</keyword>
<keyword id="KW-0540">Nuclease</keyword>
<keyword id="KW-1185">Reference proteome</keyword>
<keyword id="KW-0687">Ribonucleoprotein</keyword>
<keyword id="KW-0694">RNA-binding</keyword>
<keyword id="KW-0543">Viral nucleoprotein</keyword>
<keyword id="KW-0946">Virion</keyword>
<organismHost>
    <name type="scientific">Apodemus agrarius</name>
    <name type="common">Eurasian field mouse</name>
    <dbReference type="NCBI Taxonomy" id="39030"/>
</organismHost>
<organismHost>
    <name type="scientific">Homo sapiens</name>
    <name type="common">Human</name>
    <dbReference type="NCBI Taxonomy" id="9606"/>
</organismHost>
<sequence length="429" mass="48142">MATMEELQREINAHEGQLVIARQKVRDAEKQYEKDPDELNKRTLTDREGVAVSIQAKIDELKRQLADRIATGKNLGKEQDPTGVEPGDHLKERSMLSYGNVLDLNHLDIDEPTGQTADWLSIIVYLTSFVVPILLKALYMLTTRGRQTTKDNKGTRIRFKDDSSFEDVNGIRKPKHLYVSLPNAQSSMKAEEITPGRYRTAVCGLYPAQIKARQMISPVMSVIGFLALAKDWSDRIEQWLIEPCKLLPDTAAVSLLGGPATNRDYLRQRQVALGNMETKESKAIRQHAEAAGCSMIEDIESPSSIWVFAGAPDRCPPTCLFIAGIAELGAFFSILQDMRNTIMASKTVGTSEEKLRKKSSFYQSYLRRTQSMGIQLGQRIIVLFMVAWGKEAVDNFHLGDDMDPELRTLAQSLIDVKVKEISNQEPLKL</sequence>
<accession>P05133</accession>
<evidence type="ECO:0000250" key="1">
    <source>
        <dbReference type="UniProtKB" id="O36307"/>
    </source>
</evidence>
<evidence type="ECO:0000250" key="2">
    <source>
        <dbReference type="UniProtKB" id="P27313"/>
    </source>
</evidence>
<evidence type="ECO:0000250" key="3">
    <source>
        <dbReference type="UniProtKB" id="Q88918"/>
    </source>
</evidence>
<evidence type="ECO:0000250" key="4">
    <source>
        <dbReference type="UniProtKB" id="Q89462"/>
    </source>
</evidence>
<evidence type="ECO:0000255" key="5"/>
<evidence type="ECO:0000269" key="6">
    <source>
    </source>
</evidence>
<evidence type="ECO:0000269" key="7">
    <source>
    </source>
</evidence>
<evidence type="ECO:0000269" key="8">
    <source>
    </source>
</evidence>
<evidence type="ECO:0000269" key="9">
    <source>
    </source>
</evidence>
<evidence type="ECO:0000269" key="10">
    <source>
    </source>
</evidence>
<evidence type="ECO:0000269" key="11">
    <source>
    </source>
</evidence>
<evidence type="ECO:0000269" key="12">
    <source>
    </source>
</evidence>
<evidence type="ECO:0000269" key="13">
    <source>
    </source>
</evidence>
<evidence type="ECO:0000269" key="14">
    <source>
    </source>
</evidence>
<evidence type="ECO:0000269" key="15">
    <source>
    </source>
</evidence>
<evidence type="ECO:0000305" key="16"/>
<evidence type="ECO:0007744" key="17">
    <source>
        <dbReference type="PDB" id="5FSG"/>
    </source>
</evidence>
<evidence type="ECO:0007744" key="18">
    <source>
        <dbReference type="PDB" id="6I2N"/>
    </source>
</evidence>
<evidence type="ECO:0007829" key="19">
    <source>
        <dbReference type="PDB" id="4FI5"/>
    </source>
</evidence>
<evidence type="ECO:0007829" key="20">
    <source>
        <dbReference type="PDB" id="5FSG"/>
    </source>
</evidence>
<evidence type="ECO:0007829" key="21">
    <source>
        <dbReference type="PDB" id="6I2N"/>
    </source>
</evidence>
<dbReference type="EC" id="3.1.-.-" evidence="4"/>
<dbReference type="EMBL" id="M14626">
    <property type="protein sequence ID" value="AAA43837.1"/>
    <property type="molecule type" value="Genomic_RNA"/>
</dbReference>
<dbReference type="PIR" id="A25617">
    <property type="entry name" value="VHVUHV"/>
</dbReference>
<dbReference type="PDB" id="4FI5">
    <property type="method" value="X-ray"/>
    <property type="resolution" value="2.20 A"/>
    <property type="chains" value="A=3-93"/>
</dbReference>
<dbReference type="PDB" id="5FSG">
    <property type="method" value="X-ray"/>
    <property type="resolution" value="3.21 A"/>
    <property type="chains" value="A=113-429"/>
</dbReference>
<dbReference type="PDB" id="6I2N">
    <property type="method" value="EM"/>
    <property type="resolution" value="3.30 A"/>
    <property type="chains" value="D=1-429"/>
</dbReference>
<dbReference type="PDBsum" id="4FI5"/>
<dbReference type="PDBsum" id="5FSG"/>
<dbReference type="PDBsum" id="6I2N"/>
<dbReference type="EMDB" id="EMD-0333"/>
<dbReference type="SMR" id="P05133"/>
<dbReference type="KEGG" id="vg:2943078"/>
<dbReference type="EvolutionaryTrace" id="P05133"/>
<dbReference type="Proteomes" id="UP000008627">
    <property type="component" value="Genome"/>
</dbReference>
<dbReference type="GO" id="GO:0019029">
    <property type="term" value="C:helical viral capsid"/>
    <property type="evidence" value="ECO:0007669"/>
    <property type="project" value="UniProtKB-KW"/>
</dbReference>
<dbReference type="GO" id="GO:0044177">
    <property type="term" value="C:host cell Golgi apparatus"/>
    <property type="evidence" value="ECO:0007669"/>
    <property type="project" value="UniProtKB-SubCell"/>
</dbReference>
<dbReference type="GO" id="GO:0044220">
    <property type="term" value="C:host cell perinuclear region of cytoplasm"/>
    <property type="evidence" value="ECO:0007669"/>
    <property type="project" value="UniProtKB-SubCell"/>
</dbReference>
<dbReference type="GO" id="GO:1990904">
    <property type="term" value="C:ribonucleoprotein complex"/>
    <property type="evidence" value="ECO:0007669"/>
    <property type="project" value="UniProtKB-KW"/>
</dbReference>
<dbReference type="GO" id="GO:0019013">
    <property type="term" value="C:viral nucleocapsid"/>
    <property type="evidence" value="ECO:0000314"/>
    <property type="project" value="UniProtKB"/>
</dbReference>
<dbReference type="GO" id="GO:0004519">
    <property type="term" value="F:endonuclease activity"/>
    <property type="evidence" value="ECO:0007669"/>
    <property type="project" value="UniProtKB-KW"/>
</dbReference>
<dbReference type="GO" id="GO:0003723">
    <property type="term" value="F:RNA binding"/>
    <property type="evidence" value="ECO:0000314"/>
    <property type="project" value="UniProtKB"/>
</dbReference>
<dbReference type="GO" id="GO:0033668">
    <property type="term" value="P:symbiont-mediated suppression of host apoptosis"/>
    <property type="evidence" value="ECO:0000314"/>
    <property type="project" value="UniProtKB"/>
</dbReference>
<dbReference type="Gene3D" id="1.20.58.90">
    <property type="match status" value="1"/>
</dbReference>
<dbReference type="InterPro" id="IPR002214">
    <property type="entry name" value="Hanta_nucleocap"/>
</dbReference>
<dbReference type="Pfam" id="PF00846">
    <property type="entry name" value="Hanta_nucleocap"/>
    <property type="match status" value="1"/>
</dbReference>
<dbReference type="PIRSF" id="PIRSF003949">
    <property type="entry name" value="N_HantaV"/>
    <property type="match status" value="1"/>
</dbReference>
<protein>
    <recommendedName>
        <fullName>Nucleoprotein</fullName>
        <ecNumber evidence="4">3.1.-.-</ecNumber>
    </recommendedName>
    <alternativeName>
        <fullName>Nucleocapsid protein</fullName>
        <shortName>Protein N</shortName>
    </alternativeName>
</protein>
<reference key="1">
    <citation type="journal article" date="1986" name="Virology">
        <title>Coding strategy of the S genome segment of Hantaan virus.</title>
        <authorList>
            <person name="Schmaljohn C.S."/>
            <person name="Jennings G.B."/>
            <person name="Hay J."/>
            <person name="Dalrymple J.M."/>
        </authorList>
    </citation>
    <scope>NUCLEOTIDE SEQUENCE [GENOMIC RNA]</scope>
</reference>
<reference key="2">
    <citation type="journal article" date="2002" name="J. Virol.">
        <title>The RNA binding domain of the hantaan virus N protein maps to a central, conserved region.</title>
        <authorList>
            <person name="Xu X."/>
            <person name="Severson W."/>
            <person name="Villegas N."/>
            <person name="Schmaljohn C.S."/>
            <person name="Jonsson C.B."/>
        </authorList>
    </citation>
    <scope>DOMAIN</scope>
    <scope>RNA-BINDING</scope>
</reference>
<reference key="3">
    <citation type="journal article" date="2003" name="J. Virol.">
        <title>The multimerization of hantavirus nucleocapsid protein depends on type-specific epitopes.</title>
        <authorList>
            <person name="Yoshimatsu K."/>
            <person name="Lee B.H."/>
            <person name="Araki K."/>
            <person name="Morimatsu M."/>
            <person name="Ogino M."/>
            <person name="Ebihara H."/>
            <person name="Arikawa J."/>
        </authorList>
    </citation>
    <scope>SUBUNIT</scope>
</reference>
<reference key="4">
    <citation type="journal article" date="2003" name="Virus Res.">
        <title>Association of the nucleocapsid protein of the Seoul and Hantaan hantaviruses with small ubiquitin-like modifier-1-related molecules.</title>
        <authorList>
            <person name="Lee B.H."/>
            <person name="Yoshimatsu K."/>
            <person name="Maeda A."/>
            <person name="Ochiai K."/>
            <person name="Morimatsu M."/>
            <person name="Araki K."/>
            <person name="Ogino M."/>
            <person name="Morikawa S."/>
            <person name="Arikawa J."/>
        </authorList>
    </citation>
    <scope>INTERACTION WITH HOST HIPK2</scope>
    <scope>INTERACTION WITH HOST CHD3</scope>
    <scope>INTERACTION WITH HOST TDP2/TTRAP</scope>
</reference>
<reference key="5">
    <citation type="journal article" date="2003" name="Virology">
        <title>The intracellular association of the nucleocapsid protein (NP) of hantaan virus (HTNV) with small ubiquitin-like modifier-1 (SUMO-1) conjugating enzyme 9 (Ubc9).</title>
        <authorList>
            <person name="Maeda A."/>
            <person name="Lee B.H."/>
            <person name="Yoshimatsu K."/>
            <person name="Saijo M."/>
            <person name="Kurane I."/>
            <person name="Arikawa J."/>
            <person name="Morikawa S."/>
        </authorList>
    </citation>
    <scope>INTERACTION WITH HOST UBE2I/UBC9</scope>
    <scope>INTERACTION WITH HOST SUMO1</scope>
    <scope>SUBCELLULAR LOCATION</scope>
    <scope>MUTAGENESIS OF LYS-189 AND GLU-191</scope>
</reference>
<reference key="6">
    <citation type="journal article" date="2005" name="J. Virol.">
        <title>Essential amino acids of the hantaan virus N protein in its interaction with RNA.</title>
        <authorList>
            <person name="Severson W."/>
            <person name="Xu X."/>
            <person name="Kuhn M."/>
            <person name="Senutovitch N."/>
            <person name="Thokala M."/>
            <person name="Ferron F."/>
            <person name="Longhi S."/>
            <person name="Canard B."/>
            <person name="Jonsson C.B."/>
        </authorList>
    </citation>
    <scope>DOMAIN</scope>
    <scope>RNA-BINDING</scope>
    <scope>MUTAGENESIS OF TYR-178; GLU-192; TYR-206 AND SER-217</scope>
</reference>
<reference key="7">
    <citation type="journal article" date="2010" name="Virology">
        <title>Modulation of apoptosis and immune signaling pathways by the Hantaan virus nucleocapsid protein.</title>
        <authorList>
            <person name="Ontiveros S.J."/>
            <person name="Li Q."/>
            <person name="Jonsson C.B."/>
        </authorList>
    </citation>
    <scope>FUNCTION</scope>
    <scope>INTERACTION WITH HOST NF-KAPPA-B</scope>
</reference>
<reference key="8">
    <citation type="journal article" date="2013" name="Virus Res.">
        <title>Role of nucleocapsid protein of hantaviruses in intracellular traffic of viral glycoproteins.</title>
        <authorList>
            <person name="Shimizu K."/>
            <person name="Yoshimatsu K."/>
            <person name="Koma T."/>
            <person name="Yasuda S.P."/>
            <person name="Arikawa J."/>
        </authorList>
    </citation>
    <scope>SUBCELLULAR LOCATION</scope>
</reference>
<reference key="9">
    <citation type="journal article" date="2019" name="Cell Rep.">
        <title>The Glycoprotein and Nucleocapsid Protein of Hantaviruses Manipulate Autophagy Flux to Restrain Host Innate Immune Responses.</title>
        <authorList>
            <person name="Wang K."/>
            <person name="Ma H."/>
            <person name="Liu H."/>
            <person name="Ye W."/>
            <person name="Li Z."/>
            <person name="Cheng L."/>
            <person name="Zhang L."/>
            <person name="Lei Y."/>
            <person name="Shen L."/>
            <person name="Zhang F."/>
        </authorList>
    </citation>
    <scope>FUNCTION</scope>
    <scope>INTERACTION WITH HOST MAP1LC3B</scope>
    <scope>INTERACTION WITH HOST SNAP29</scope>
    <scope>DOMAIN</scope>
</reference>
<reference evidence="17" key="10">
    <citation type="journal article" date="2016" name="Cell Rep.">
        <title>Structure of the Hantavirus Nucleoprotein Provides Insights into the Mechanism of RNA Encapsidation.</title>
        <authorList>
            <person name="Olal D."/>
            <person name="Daumke O."/>
        </authorList>
    </citation>
    <scope>X-RAY CRYSTALLOGRAPHY (3.21 ANGSTROMS) OF 113-429</scope>
    <scope>SUBUNIT</scope>
    <scope>RNA-BINDING</scope>
    <scope>FUNCTION</scope>
</reference>
<reference evidence="18" key="11">
    <citation type="journal article" date="2019" name="Elife">
        <title>High resolution cryo-EM structure of the helical RNA-bound Hantaan virus nucleocapsid reveals its assembly mechanisms.</title>
        <authorList>
            <person name="Arragain B."/>
            <person name="Reguera J."/>
            <person name="Desfosses A."/>
            <person name="Gutsche I."/>
            <person name="Schoehn G."/>
            <person name="Malet H."/>
        </authorList>
    </citation>
    <scope>STRUCTURE BY ELECTRON MICROSCOPY (3.30 ANGSTROMS)</scope>
    <scope>SUBUNIT</scope>
    <scope>FUNCTION</scope>
</reference>
<gene>
    <name type="primary">N</name>
</gene>